<keyword id="KW-1015">Disulfide bond</keyword>
<keyword id="KW-0472">Membrane</keyword>
<keyword id="KW-0496">Mitochondrion</keyword>
<keyword id="KW-0999">Mitochondrion inner membrane</keyword>
<keyword id="KW-0653">Protein transport</keyword>
<keyword id="KW-1267">Proteomics identification</keyword>
<keyword id="KW-1185">Reference proteome</keyword>
<keyword id="KW-0811">Translocation</keyword>
<keyword id="KW-0812">Transmembrane</keyword>
<keyword id="KW-1133">Transmembrane helix</keyword>
<keyword id="KW-0813">Transport</keyword>
<sequence length="171" mass="18024">MEEYAREPCPWRIVDDCGGAFTMGTIGGGIFQAIKGFRNSPVGVNHRLRGSLTAIKTRAPQLGGSFAVWGGLFSMIDCSMVQVRGKEDPWNSITSGALTGAILAARNGPVAMVGSAAMGGILLALIEGAGILLTRFASAQFPNGPQFAEDPSQLPSTQLPSSPFGDYRQYQ</sequence>
<reference key="1">
    <citation type="journal article" date="1996" name="J. Mol. Biol.">
        <title>The preprotein translocase of the inner mitochondrial membrane: evolutionary conservation of targeting and assembly of Tim17.</title>
        <authorList>
            <person name="Boemer U."/>
            <person name="Rassow J."/>
            <person name="Zufall N."/>
            <person name="Pfanner N."/>
            <person name="Meijer M."/>
            <person name="Maarse A.C."/>
        </authorList>
    </citation>
    <scope>NUCLEOTIDE SEQUENCE [MRNA]</scope>
</reference>
<reference key="2">
    <citation type="journal article" date="1999" name="J. Mol. Biol.">
        <title>Genetic and structural characterization of the human mitochondrial inner membrane translocase.</title>
        <authorList>
            <person name="Bauer M.F."/>
            <person name="Gempel K."/>
            <person name="Reichert A.S."/>
            <person name="Rappold G.A."/>
            <person name="Lichtner P."/>
            <person name="Gerbitz K.-D."/>
            <person name="Neupert W."/>
            <person name="Brunner M."/>
            <person name="Hofmann S."/>
        </authorList>
    </citation>
    <scope>NUCLEOTIDE SEQUENCE [MRNA]</scope>
    <scope>FUNCTION</scope>
    <scope>SUBCELLULAR LOCATION</scope>
</reference>
<reference key="3">
    <citation type="journal article" date="2004" name="Nat. Genet.">
        <title>Complete sequencing and characterization of 21,243 full-length human cDNAs.</title>
        <authorList>
            <person name="Ota T."/>
            <person name="Suzuki Y."/>
            <person name="Nishikawa T."/>
            <person name="Otsuki T."/>
            <person name="Sugiyama T."/>
            <person name="Irie R."/>
            <person name="Wakamatsu A."/>
            <person name="Hayashi K."/>
            <person name="Sato H."/>
            <person name="Nagai K."/>
            <person name="Kimura K."/>
            <person name="Makita H."/>
            <person name="Sekine M."/>
            <person name="Obayashi M."/>
            <person name="Nishi T."/>
            <person name="Shibahara T."/>
            <person name="Tanaka T."/>
            <person name="Ishii S."/>
            <person name="Yamamoto J."/>
            <person name="Saito K."/>
            <person name="Kawai Y."/>
            <person name="Isono Y."/>
            <person name="Nakamura Y."/>
            <person name="Nagahari K."/>
            <person name="Murakami K."/>
            <person name="Yasuda T."/>
            <person name="Iwayanagi T."/>
            <person name="Wagatsuma M."/>
            <person name="Shiratori A."/>
            <person name="Sudo H."/>
            <person name="Hosoiri T."/>
            <person name="Kaku Y."/>
            <person name="Kodaira H."/>
            <person name="Kondo H."/>
            <person name="Sugawara M."/>
            <person name="Takahashi M."/>
            <person name="Kanda K."/>
            <person name="Yokoi T."/>
            <person name="Furuya T."/>
            <person name="Kikkawa E."/>
            <person name="Omura Y."/>
            <person name="Abe K."/>
            <person name="Kamihara K."/>
            <person name="Katsuta N."/>
            <person name="Sato K."/>
            <person name="Tanikawa M."/>
            <person name="Yamazaki M."/>
            <person name="Ninomiya K."/>
            <person name="Ishibashi T."/>
            <person name="Yamashita H."/>
            <person name="Murakawa K."/>
            <person name="Fujimori K."/>
            <person name="Tanai H."/>
            <person name="Kimata M."/>
            <person name="Watanabe M."/>
            <person name="Hiraoka S."/>
            <person name="Chiba Y."/>
            <person name="Ishida S."/>
            <person name="Ono Y."/>
            <person name="Takiguchi S."/>
            <person name="Watanabe S."/>
            <person name="Yosida M."/>
            <person name="Hotuta T."/>
            <person name="Kusano J."/>
            <person name="Kanehori K."/>
            <person name="Takahashi-Fujii A."/>
            <person name="Hara H."/>
            <person name="Tanase T.-O."/>
            <person name="Nomura Y."/>
            <person name="Togiya S."/>
            <person name="Komai F."/>
            <person name="Hara R."/>
            <person name="Takeuchi K."/>
            <person name="Arita M."/>
            <person name="Imose N."/>
            <person name="Musashino K."/>
            <person name="Yuuki H."/>
            <person name="Oshima A."/>
            <person name="Sasaki N."/>
            <person name="Aotsuka S."/>
            <person name="Yoshikawa Y."/>
            <person name="Matsunawa H."/>
            <person name="Ichihara T."/>
            <person name="Shiohata N."/>
            <person name="Sano S."/>
            <person name="Moriya S."/>
            <person name="Momiyama H."/>
            <person name="Satoh N."/>
            <person name="Takami S."/>
            <person name="Terashima Y."/>
            <person name="Suzuki O."/>
            <person name="Nakagawa S."/>
            <person name="Senoh A."/>
            <person name="Mizoguchi H."/>
            <person name="Goto Y."/>
            <person name="Shimizu F."/>
            <person name="Wakebe H."/>
            <person name="Hishigaki H."/>
            <person name="Watanabe T."/>
            <person name="Sugiyama A."/>
            <person name="Takemoto M."/>
            <person name="Kawakami B."/>
            <person name="Yamazaki M."/>
            <person name="Watanabe K."/>
            <person name="Kumagai A."/>
            <person name="Itakura S."/>
            <person name="Fukuzumi Y."/>
            <person name="Fujimori Y."/>
            <person name="Komiyama M."/>
            <person name="Tashiro H."/>
            <person name="Tanigami A."/>
            <person name="Fujiwara T."/>
            <person name="Ono T."/>
            <person name="Yamada K."/>
            <person name="Fujii Y."/>
            <person name="Ozaki K."/>
            <person name="Hirao M."/>
            <person name="Ohmori Y."/>
            <person name="Kawabata A."/>
            <person name="Hikiji T."/>
            <person name="Kobatake N."/>
            <person name="Inagaki H."/>
            <person name="Ikema Y."/>
            <person name="Okamoto S."/>
            <person name="Okitani R."/>
            <person name="Kawakami T."/>
            <person name="Noguchi S."/>
            <person name="Itoh T."/>
            <person name="Shigeta K."/>
            <person name="Senba T."/>
            <person name="Matsumura K."/>
            <person name="Nakajima Y."/>
            <person name="Mizuno T."/>
            <person name="Morinaga M."/>
            <person name="Sasaki M."/>
            <person name="Togashi T."/>
            <person name="Oyama M."/>
            <person name="Hata H."/>
            <person name="Watanabe M."/>
            <person name="Komatsu T."/>
            <person name="Mizushima-Sugano J."/>
            <person name="Satoh T."/>
            <person name="Shirai Y."/>
            <person name="Takahashi Y."/>
            <person name="Nakagawa K."/>
            <person name="Okumura K."/>
            <person name="Nagase T."/>
            <person name="Nomura N."/>
            <person name="Kikuchi H."/>
            <person name="Masuho Y."/>
            <person name="Yamashita R."/>
            <person name="Nakai K."/>
            <person name="Yada T."/>
            <person name="Nakamura Y."/>
            <person name="Ohara O."/>
            <person name="Isogai T."/>
            <person name="Sugano S."/>
        </authorList>
    </citation>
    <scope>NUCLEOTIDE SEQUENCE [LARGE SCALE MRNA]</scope>
    <source>
        <tissue>Skeletal muscle</tissue>
    </source>
</reference>
<reference key="4">
    <citation type="submission" date="2005-07" db="EMBL/GenBank/DDBJ databases">
        <authorList>
            <person name="Mural R.J."/>
            <person name="Istrail S."/>
            <person name="Sutton G.G."/>
            <person name="Florea L."/>
            <person name="Halpern A.L."/>
            <person name="Mobarry C.M."/>
            <person name="Lippert R."/>
            <person name="Walenz B."/>
            <person name="Shatkay H."/>
            <person name="Dew I."/>
            <person name="Miller J.R."/>
            <person name="Flanigan M.J."/>
            <person name="Edwards N.J."/>
            <person name="Bolanos R."/>
            <person name="Fasulo D."/>
            <person name="Halldorsson B.V."/>
            <person name="Hannenhalli S."/>
            <person name="Turner R."/>
            <person name="Yooseph S."/>
            <person name="Lu F."/>
            <person name="Nusskern D.R."/>
            <person name="Shue B.C."/>
            <person name="Zheng X.H."/>
            <person name="Zhong F."/>
            <person name="Delcher A.L."/>
            <person name="Huson D.H."/>
            <person name="Kravitz S.A."/>
            <person name="Mouchard L."/>
            <person name="Reinert K."/>
            <person name="Remington K.A."/>
            <person name="Clark A.G."/>
            <person name="Waterman M.S."/>
            <person name="Eichler E.E."/>
            <person name="Adams M.D."/>
            <person name="Hunkapiller M.W."/>
            <person name="Myers E.W."/>
            <person name="Venter J.C."/>
        </authorList>
    </citation>
    <scope>NUCLEOTIDE SEQUENCE [LARGE SCALE GENOMIC DNA]</scope>
</reference>
<reference key="5">
    <citation type="journal article" date="2004" name="Genome Res.">
        <title>The status, quality, and expansion of the NIH full-length cDNA project: the Mammalian Gene Collection (MGC).</title>
        <authorList>
            <consortium name="The MGC Project Team"/>
        </authorList>
    </citation>
    <scope>NUCLEOTIDE SEQUENCE [LARGE SCALE MRNA]</scope>
    <source>
        <tissue>Bone marrow</tissue>
        <tissue>Brain</tissue>
        <tissue>Lung</tissue>
        <tissue>Testis</tissue>
        <tissue>Urinary bladder</tissue>
    </source>
</reference>
<reference key="6">
    <citation type="journal article" date="2011" name="BMC Syst. Biol.">
        <title>Initial characterization of the human central proteome.</title>
        <authorList>
            <person name="Burkard T.R."/>
            <person name="Planyavsky M."/>
            <person name="Kaupe I."/>
            <person name="Breitwieser F.P."/>
            <person name="Buerckstuemmer T."/>
            <person name="Bennett K.L."/>
            <person name="Superti-Furga G."/>
            <person name="Colinge J."/>
        </authorList>
    </citation>
    <scope>IDENTIFICATION BY MASS SPECTROMETRY [LARGE SCALE ANALYSIS]</scope>
</reference>
<reference key="7">
    <citation type="journal article" date="2013" name="Cell Metab.">
        <title>Stress-regulated translational attenuation adapts mitochondrial protein import through Tim17A degradation.</title>
        <authorList>
            <person name="Rainbolt T.K."/>
            <person name="Atanassova N."/>
            <person name="Genereux J.C."/>
            <person name="Wiseman R.L."/>
        </authorList>
    </citation>
    <scope>PROTEOLYTIC CLEAVAGE</scope>
</reference>
<reference key="8">
    <citation type="journal article" date="2013" name="Hum. Mol. Genet.">
        <title>Methylation-controlled J-protein MCJ acts in the import of proteins into human mitochondria.</title>
        <authorList>
            <person name="Schusdziarra C."/>
            <person name="Blamowska M."/>
            <person name="Azem A."/>
            <person name="Hell K."/>
        </authorList>
    </citation>
    <scope>INTERACTION WITH DNAJC15</scope>
</reference>
<gene>
    <name type="primary">TIMM17A</name>
    <name type="synonym">MIMT17</name>
    <name type="synonym">TIM17</name>
    <name type="synonym">TIM17A</name>
    <name type="synonym">TIMM17</name>
</gene>
<comment type="function">
    <text evidence="4">Essential component of the TIM23 complex, a complex that mediates the translocation of transit peptide-containing proteins across the mitochondrial inner membrane.</text>
</comment>
<comment type="subunit">
    <text evidence="5">Component of the TIM23 complex at least composed of TIMM23, TIMM17 (TIMM17A or TIMM17B) and TIMM50. The complex interacts with the TIMM44 component of the PAM complex and with DNAJC15.</text>
</comment>
<comment type="subcellular location">
    <subcellularLocation>
        <location evidence="4">Mitochondrion inner membrane</location>
        <topology evidence="2">Multi-pass membrane protein</topology>
    </subcellularLocation>
</comment>
<comment type="PTM">
    <text evidence="6">Degraded by YMEL1 downstream of the integrated stress response (ISR).</text>
</comment>
<comment type="similarity">
    <text evidence="7">Belongs to the Tim17/Tim22/Tim23 family.</text>
</comment>
<protein>
    <recommendedName>
        <fullName>Mitochondrial import inner membrane translocase subunit Tim17-A</fullName>
    </recommendedName>
    <alternativeName>
        <fullName>Inner membrane preprotein translocase Tim17a</fullName>
    </alternativeName>
</protein>
<organism>
    <name type="scientific">Homo sapiens</name>
    <name type="common">Human</name>
    <dbReference type="NCBI Taxonomy" id="9606"/>
    <lineage>
        <taxon>Eukaryota</taxon>
        <taxon>Metazoa</taxon>
        <taxon>Chordata</taxon>
        <taxon>Craniata</taxon>
        <taxon>Vertebrata</taxon>
        <taxon>Euteleostomi</taxon>
        <taxon>Mammalia</taxon>
        <taxon>Eutheria</taxon>
        <taxon>Euarchontoglires</taxon>
        <taxon>Primates</taxon>
        <taxon>Haplorrhini</taxon>
        <taxon>Catarrhini</taxon>
        <taxon>Hominidae</taxon>
        <taxon>Homo</taxon>
    </lineage>
</organism>
<evidence type="ECO:0000250" key="1">
    <source>
        <dbReference type="UniProtKB" id="P39515"/>
    </source>
</evidence>
<evidence type="ECO:0000255" key="2"/>
<evidence type="ECO:0000256" key="3">
    <source>
        <dbReference type="SAM" id="MobiDB-lite"/>
    </source>
</evidence>
<evidence type="ECO:0000269" key="4">
    <source>
    </source>
</evidence>
<evidence type="ECO:0000269" key="5">
    <source>
    </source>
</evidence>
<evidence type="ECO:0000269" key="6">
    <source>
    </source>
</evidence>
<evidence type="ECO:0000305" key="7"/>
<accession>Q99595</accession>
<accession>B2RDM5</accession>
<accession>Q9BWF5</accession>
<proteinExistence type="evidence at protein level"/>
<name>TI17A_HUMAN</name>
<dbReference type="EMBL" id="X97544">
    <property type="protein sequence ID" value="CAA66146.1"/>
    <property type="molecule type" value="mRNA"/>
</dbReference>
<dbReference type="EMBL" id="AF106622">
    <property type="protein sequence ID" value="AAD19596.1"/>
    <property type="molecule type" value="mRNA"/>
</dbReference>
<dbReference type="EMBL" id="AK315602">
    <property type="protein sequence ID" value="BAG37972.1"/>
    <property type="molecule type" value="mRNA"/>
</dbReference>
<dbReference type="EMBL" id="CH471067">
    <property type="protein sequence ID" value="EAW91384.1"/>
    <property type="molecule type" value="Genomic_DNA"/>
</dbReference>
<dbReference type="EMBL" id="BC000294">
    <property type="protein sequence ID" value="AAH00294.2"/>
    <property type="molecule type" value="mRNA"/>
</dbReference>
<dbReference type="EMBL" id="BC004439">
    <property type="protein sequence ID" value="AAH04439.1"/>
    <property type="molecule type" value="mRNA"/>
</dbReference>
<dbReference type="EMBL" id="BC007106">
    <property type="protein sequence ID" value="AAH07106.1"/>
    <property type="molecule type" value="mRNA"/>
</dbReference>
<dbReference type="EMBL" id="BC009784">
    <property type="protein sequence ID" value="AAH09784.1"/>
    <property type="molecule type" value="mRNA"/>
</dbReference>
<dbReference type="EMBL" id="BC015098">
    <property type="protein sequence ID" value="AAH15098.1"/>
    <property type="molecule type" value="mRNA"/>
</dbReference>
<dbReference type="EMBL" id="BC020833">
    <property type="protein sequence ID" value="AAH20833.1"/>
    <property type="molecule type" value="mRNA"/>
</dbReference>
<dbReference type="CCDS" id="CCDS1417.1"/>
<dbReference type="RefSeq" id="NP_006326.1">
    <property type="nucleotide sequence ID" value="NM_006335.3"/>
</dbReference>
<dbReference type="SMR" id="Q99595"/>
<dbReference type="BioGRID" id="115707">
    <property type="interactions" value="33"/>
</dbReference>
<dbReference type="ComplexPortal" id="CPX-6129">
    <property type="entry name" value="TIM23 mitochondrial inner membrane pre-sequence translocase complex, TIM17A variant"/>
</dbReference>
<dbReference type="CORUM" id="Q99595"/>
<dbReference type="FunCoup" id="Q99595">
    <property type="interactions" value="2313"/>
</dbReference>
<dbReference type="IntAct" id="Q99595">
    <property type="interactions" value="10"/>
</dbReference>
<dbReference type="MINT" id="Q99595"/>
<dbReference type="STRING" id="9606.ENSP00000356256"/>
<dbReference type="iPTMnet" id="Q99595"/>
<dbReference type="PhosphoSitePlus" id="Q99595"/>
<dbReference type="SwissPalm" id="Q99595"/>
<dbReference type="BioMuta" id="TIMM17A"/>
<dbReference type="DMDM" id="3219818"/>
<dbReference type="jPOST" id="Q99595"/>
<dbReference type="MassIVE" id="Q99595"/>
<dbReference type="PaxDb" id="9606-ENSP00000356256"/>
<dbReference type="PeptideAtlas" id="Q99595"/>
<dbReference type="ProteomicsDB" id="78350"/>
<dbReference type="Pumba" id="Q99595"/>
<dbReference type="TopDownProteomics" id="Q99595"/>
<dbReference type="Antibodypedia" id="34520">
    <property type="antibodies" value="168 antibodies from 29 providers"/>
</dbReference>
<dbReference type="DNASU" id="10440"/>
<dbReference type="Ensembl" id="ENST00000367287.5">
    <property type="protein sequence ID" value="ENSP00000356256.4"/>
    <property type="gene ID" value="ENSG00000134375.11"/>
</dbReference>
<dbReference type="GeneID" id="10440"/>
<dbReference type="KEGG" id="hsa:10440"/>
<dbReference type="MANE-Select" id="ENST00000367287.5">
    <property type="protein sequence ID" value="ENSP00000356256.4"/>
    <property type="RefSeq nucleotide sequence ID" value="NM_006335.3"/>
    <property type="RefSeq protein sequence ID" value="NP_006326.1"/>
</dbReference>
<dbReference type="UCSC" id="uc001gxc.3">
    <property type="organism name" value="human"/>
</dbReference>
<dbReference type="AGR" id="HGNC:17315"/>
<dbReference type="CTD" id="10440"/>
<dbReference type="DisGeNET" id="10440"/>
<dbReference type="GeneCards" id="TIMM17A"/>
<dbReference type="HGNC" id="HGNC:17315">
    <property type="gene designation" value="TIMM17A"/>
</dbReference>
<dbReference type="HPA" id="ENSG00000134375">
    <property type="expression patterns" value="Low tissue specificity"/>
</dbReference>
<dbReference type="MIM" id="605057">
    <property type="type" value="gene"/>
</dbReference>
<dbReference type="neXtProt" id="NX_Q99595"/>
<dbReference type="OpenTargets" id="ENSG00000134375"/>
<dbReference type="PharmGKB" id="PA38228"/>
<dbReference type="VEuPathDB" id="HostDB:ENSG00000134375"/>
<dbReference type="eggNOG" id="KOG1652">
    <property type="taxonomic scope" value="Eukaryota"/>
</dbReference>
<dbReference type="GeneTree" id="ENSGT00390000017780"/>
<dbReference type="HOGENOM" id="CLU_087811_1_1_1"/>
<dbReference type="InParanoid" id="Q99595"/>
<dbReference type="OMA" id="IMFTRIS"/>
<dbReference type="OrthoDB" id="2261329at2759"/>
<dbReference type="PAN-GO" id="Q99595">
    <property type="GO annotations" value="4 GO annotations based on evolutionary models"/>
</dbReference>
<dbReference type="PhylomeDB" id="Q99595"/>
<dbReference type="TreeFam" id="TF106195"/>
<dbReference type="PathwayCommons" id="Q99595"/>
<dbReference type="Reactome" id="R-HSA-1268020">
    <property type="pathway name" value="Mitochondrial protein import"/>
</dbReference>
<dbReference type="Reactome" id="R-HSA-9837999">
    <property type="pathway name" value="Mitochondrial protein degradation"/>
</dbReference>
<dbReference type="SignaLink" id="Q99595"/>
<dbReference type="SIGNOR" id="Q99595"/>
<dbReference type="BioGRID-ORCS" id="10440">
    <property type="hits" value="140 hits in 1168 CRISPR screens"/>
</dbReference>
<dbReference type="ChiTaRS" id="TIMM17A">
    <property type="organism name" value="human"/>
</dbReference>
<dbReference type="GeneWiki" id="TIMM17A"/>
<dbReference type="GenomeRNAi" id="10440"/>
<dbReference type="Pharos" id="Q99595">
    <property type="development level" value="Tbio"/>
</dbReference>
<dbReference type="PRO" id="PR:Q99595"/>
<dbReference type="Proteomes" id="UP000005640">
    <property type="component" value="Chromosome 1"/>
</dbReference>
<dbReference type="RNAct" id="Q99595">
    <property type="molecule type" value="protein"/>
</dbReference>
<dbReference type="Bgee" id="ENSG00000134375">
    <property type="expression patterns" value="Expressed in Brodmann (1909) area 23 and 213 other cell types or tissues"/>
</dbReference>
<dbReference type="GO" id="GO:0005743">
    <property type="term" value="C:mitochondrial inner membrane"/>
    <property type="evidence" value="ECO:0000314"/>
    <property type="project" value="BHF-UCL"/>
</dbReference>
<dbReference type="GO" id="GO:0005739">
    <property type="term" value="C:mitochondrion"/>
    <property type="evidence" value="ECO:0000314"/>
    <property type="project" value="HPA"/>
</dbReference>
<dbReference type="GO" id="GO:0005654">
    <property type="term" value="C:nucleoplasm"/>
    <property type="evidence" value="ECO:0000314"/>
    <property type="project" value="HPA"/>
</dbReference>
<dbReference type="GO" id="GO:0005744">
    <property type="term" value="C:TIM23 mitochondrial import inner membrane translocase complex"/>
    <property type="evidence" value="ECO:0000314"/>
    <property type="project" value="BHF-UCL"/>
</dbReference>
<dbReference type="GO" id="GO:0008320">
    <property type="term" value="F:protein transmembrane transporter activity"/>
    <property type="evidence" value="ECO:0007669"/>
    <property type="project" value="InterPro"/>
</dbReference>
<dbReference type="GO" id="GO:0006886">
    <property type="term" value="P:intracellular protein transport"/>
    <property type="evidence" value="ECO:0000303"/>
    <property type="project" value="ComplexPortal"/>
</dbReference>
<dbReference type="GO" id="GO:0030150">
    <property type="term" value="P:protein import into mitochondrial matrix"/>
    <property type="evidence" value="ECO:0000318"/>
    <property type="project" value="GO_Central"/>
</dbReference>
<dbReference type="GO" id="GO:0006626">
    <property type="term" value="P:protein targeting to mitochondrion"/>
    <property type="evidence" value="ECO:0000304"/>
    <property type="project" value="ProtInc"/>
</dbReference>
<dbReference type="InterPro" id="IPR005678">
    <property type="entry name" value="Tim17"/>
</dbReference>
<dbReference type="NCBIfam" id="TIGR00980">
    <property type="entry name" value="3a0801so1tim17"/>
    <property type="match status" value="1"/>
</dbReference>
<dbReference type="PANTHER" id="PTHR10485">
    <property type="entry name" value="MITOCHONDRIAL IMPORT INNER MEMBRANE TRANSLOCASE SUBUNIT TIM-17"/>
    <property type="match status" value="1"/>
</dbReference>
<dbReference type="PANTHER" id="PTHR10485:SF1">
    <property type="entry name" value="MITOCHONDRIAL IMPORT INNER MEMBRANE TRANSLOCASE SUBUNIT TIM17-A"/>
    <property type="match status" value="1"/>
</dbReference>
<dbReference type="Pfam" id="PF02466">
    <property type="entry name" value="Tim17"/>
    <property type="match status" value="1"/>
</dbReference>
<feature type="chain" id="PRO_0000210284" description="Mitochondrial import inner membrane translocase subunit Tim17-A">
    <location>
        <begin position="1"/>
        <end position="171"/>
    </location>
</feature>
<feature type="transmembrane region" description="Helical" evidence="2">
    <location>
        <begin position="17"/>
        <end position="37"/>
    </location>
</feature>
<feature type="transmembrane region" description="Helical" evidence="2">
    <location>
        <begin position="63"/>
        <end position="77"/>
    </location>
</feature>
<feature type="transmembrane region" description="Helical" evidence="2">
    <location>
        <begin position="113"/>
        <end position="133"/>
    </location>
</feature>
<feature type="region of interest" description="Disordered" evidence="3">
    <location>
        <begin position="144"/>
        <end position="171"/>
    </location>
</feature>
<feature type="compositionally biased region" description="Low complexity" evidence="3">
    <location>
        <begin position="151"/>
        <end position="163"/>
    </location>
</feature>
<feature type="disulfide bond" evidence="1">
    <location>
        <begin position="9"/>
        <end position="78"/>
    </location>
</feature>
<feature type="sequence variant" id="VAR_052305" description="In dbSNP:rs4648.">
    <original>V</original>
    <variation>I</variation>
    <location>
        <position position="113"/>
    </location>
</feature>